<dbReference type="EC" id="2.3.1.129" evidence="1"/>
<dbReference type="EMBL" id="CP001488">
    <property type="protein sequence ID" value="ACO00928.1"/>
    <property type="molecule type" value="Genomic_DNA"/>
</dbReference>
<dbReference type="RefSeq" id="WP_002964279.1">
    <property type="nucleotide sequence ID" value="NC_012441.1"/>
</dbReference>
<dbReference type="SMR" id="C0RJC0"/>
<dbReference type="GeneID" id="97533598"/>
<dbReference type="KEGG" id="bmi:BMEA_A1195"/>
<dbReference type="HOGENOM" id="CLU_061249_0_0_5"/>
<dbReference type="UniPathway" id="UPA00359">
    <property type="reaction ID" value="UER00477"/>
</dbReference>
<dbReference type="Proteomes" id="UP000001748">
    <property type="component" value="Chromosome I"/>
</dbReference>
<dbReference type="GO" id="GO:0005737">
    <property type="term" value="C:cytoplasm"/>
    <property type="evidence" value="ECO:0007669"/>
    <property type="project" value="UniProtKB-SubCell"/>
</dbReference>
<dbReference type="GO" id="GO:0016020">
    <property type="term" value="C:membrane"/>
    <property type="evidence" value="ECO:0007669"/>
    <property type="project" value="GOC"/>
</dbReference>
<dbReference type="GO" id="GO:0008780">
    <property type="term" value="F:acyl-[acyl-carrier-protein]-UDP-N-acetylglucosamine O-acyltransferase activity"/>
    <property type="evidence" value="ECO:0007669"/>
    <property type="project" value="UniProtKB-UniRule"/>
</dbReference>
<dbReference type="GO" id="GO:0009245">
    <property type="term" value="P:lipid A biosynthetic process"/>
    <property type="evidence" value="ECO:0007669"/>
    <property type="project" value="UniProtKB-UniRule"/>
</dbReference>
<dbReference type="CDD" id="cd03351">
    <property type="entry name" value="LbH_UDP-GlcNAc_AT"/>
    <property type="match status" value="1"/>
</dbReference>
<dbReference type="Gene3D" id="2.160.10.10">
    <property type="entry name" value="Hexapeptide repeat proteins"/>
    <property type="match status" value="1"/>
</dbReference>
<dbReference type="Gene3D" id="1.20.1180.10">
    <property type="entry name" value="Udp N-acetylglucosamine O-acyltransferase, C-terminal domain"/>
    <property type="match status" value="1"/>
</dbReference>
<dbReference type="HAMAP" id="MF_00387">
    <property type="entry name" value="LpxA"/>
    <property type="match status" value="1"/>
</dbReference>
<dbReference type="InterPro" id="IPR029098">
    <property type="entry name" value="Acetyltransf_C"/>
</dbReference>
<dbReference type="InterPro" id="IPR037157">
    <property type="entry name" value="Acetyltransf_C_sf"/>
</dbReference>
<dbReference type="InterPro" id="IPR001451">
    <property type="entry name" value="Hexapep"/>
</dbReference>
<dbReference type="InterPro" id="IPR018357">
    <property type="entry name" value="Hexapep_transf_CS"/>
</dbReference>
<dbReference type="InterPro" id="IPR010137">
    <property type="entry name" value="Lipid_A_LpxA"/>
</dbReference>
<dbReference type="InterPro" id="IPR011004">
    <property type="entry name" value="Trimer_LpxA-like_sf"/>
</dbReference>
<dbReference type="NCBIfam" id="TIGR01852">
    <property type="entry name" value="lipid_A_lpxA"/>
    <property type="match status" value="1"/>
</dbReference>
<dbReference type="NCBIfam" id="NF003657">
    <property type="entry name" value="PRK05289.1"/>
    <property type="match status" value="1"/>
</dbReference>
<dbReference type="PANTHER" id="PTHR43480">
    <property type="entry name" value="ACYL-[ACYL-CARRIER-PROTEIN]--UDP-N-ACETYLGLUCOSAMINE O-ACYLTRANSFERASE"/>
    <property type="match status" value="1"/>
</dbReference>
<dbReference type="PANTHER" id="PTHR43480:SF1">
    <property type="entry name" value="ACYL-[ACYL-CARRIER-PROTEIN]--UDP-N-ACETYLGLUCOSAMINE O-ACYLTRANSFERASE, MITOCHONDRIAL-RELATED"/>
    <property type="match status" value="1"/>
</dbReference>
<dbReference type="Pfam" id="PF13720">
    <property type="entry name" value="Acetyltransf_11"/>
    <property type="match status" value="1"/>
</dbReference>
<dbReference type="Pfam" id="PF00132">
    <property type="entry name" value="Hexapep"/>
    <property type="match status" value="2"/>
</dbReference>
<dbReference type="PIRSF" id="PIRSF000456">
    <property type="entry name" value="UDP-GlcNAc_acltr"/>
    <property type="match status" value="1"/>
</dbReference>
<dbReference type="SUPFAM" id="SSF51161">
    <property type="entry name" value="Trimeric LpxA-like enzymes"/>
    <property type="match status" value="1"/>
</dbReference>
<dbReference type="PROSITE" id="PS00101">
    <property type="entry name" value="HEXAPEP_TRANSFERASES"/>
    <property type="match status" value="1"/>
</dbReference>
<gene>
    <name evidence="1" type="primary">lpxA</name>
    <name type="ordered locus">BMEA_A1195</name>
</gene>
<feature type="chain" id="PRO_1000134380" description="Acyl-[acyl-carrier-protein]--UDP-N-acetylglucosamine O-acyltransferase">
    <location>
        <begin position="1"/>
        <end position="278"/>
    </location>
</feature>
<keyword id="KW-0012">Acyltransferase</keyword>
<keyword id="KW-0963">Cytoplasm</keyword>
<keyword id="KW-0441">Lipid A biosynthesis</keyword>
<keyword id="KW-0444">Lipid biosynthesis</keyword>
<keyword id="KW-0443">Lipid metabolism</keyword>
<keyword id="KW-0677">Repeat</keyword>
<keyword id="KW-0808">Transferase</keyword>
<comment type="function">
    <text evidence="1">Involved in the biosynthesis of lipid A, a phosphorylated glycolipid that anchors the lipopolysaccharide to the outer membrane of the cell.</text>
</comment>
<comment type="catalytic activity">
    <reaction evidence="1">
        <text>a (3R)-hydroxyacyl-[ACP] + UDP-N-acetyl-alpha-D-glucosamine = a UDP-3-O-[(3R)-3-hydroxyacyl]-N-acetyl-alpha-D-glucosamine + holo-[ACP]</text>
        <dbReference type="Rhea" id="RHEA:67812"/>
        <dbReference type="Rhea" id="RHEA-COMP:9685"/>
        <dbReference type="Rhea" id="RHEA-COMP:9945"/>
        <dbReference type="ChEBI" id="CHEBI:57705"/>
        <dbReference type="ChEBI" id="CHEBI:64479"/>
        <dbReference type="ChEBI" id="CHEBI:78827"/>
        <dbReference type="ChEBI" id="CHEBI:173225"/>
        <dbReference type="EC" id="2.3.1.129"/>
    </reaction>
</comment>
<comment type="pathway">
    <text evidence="1">Glycolipid biosynthesis; lipid IV(A) biosynthesis; lipid IV(A) from (3R)-3-hydroxytetradecanoyl-[acyl-carrier-protein] and UDP-N-acetyl-alpha-D-glucosamine: step 1/6.</text>
</comment>
<comment type="subunit">
    <text evidence="1">Homotrimer.</text>
</comment>
<comment type="subcellular location">
    <subcellularLocation>
        <location evidence="1">Cytoplasm</location>
    </subcellularLocation>
</comment>
<comment type="similarity">
    <text evidence="1">Belongs to the transferase hexapeptide repeat family. LpxA subfamily.</text>
</comment>
<organism>
    <name type="scientific">Brucella melitensis biotype 2 (strain ATCC 23457)</name>
    <dbReference type="NCBI Taxonomy" id="546272"/>
    <lineage>
        <taxon>Bacteria</taxon>
        <taxon>Pseudomonadati</taxon>
        <taxon>Pseudomonadota</taxon>
        <taxon>Alphaproteobacteria</taxon>
        <taxon>Hyphomicrobiales</taxon>
        <taxon>Brucellaceae</taxon>
        <taxon>Brucella/Ochrobactrum group</taxon>
        <taxon>Brucella</taxon>
    </lineage>
</organism>
<protein>
    <recommendedName>
        <fullName evidence="1">Acyl-[acyl-carrier-protein]--UDP-N-acetylglucosamine O-acyltransferase</fullName>
        <shortName evidence="1">UDP-N-acetylglucosamine acyltransferase</shortName>
        <ecNumber evidence="1">2.3.1.129</ecNumber>
    </recommendedName>
</protein>
<sequence>MKETFIHPTALVEPGVELGQGVSVGPFCHVQSGAIIGNDCELMSHVVITGATTLGAGTKVYPHAILGCDPQNNKHKGGPTRLNVGVNCIIREGVTMHKGSDNARGYTSIGDNCSFLAYAHVAHDCDIGDYVTFSNNVMIGGHTSIGHHAILGGGAAVHQFVRVGHHAFIGGLAAVVSDLIPYGMAIGVHAHLGGLNIIGMKRSGMERKEIHNLRHAVRMLFDRTKPIRQRAQDVLAAIPDSPTVSDMISFINVDTKRAYCTPPLDAAHGGAGHDSDED</sequence>
<proteinExistence type="inferred from homology"/>
<accession>C0RJC0</accession>
<name>LPXA_BRUMB</name>
<evidence type="ECO:0000255" key="1">
    <source>
        <dbReference type="HAMAP-Rule" id="MF_00387"/>
    </source>
</evidence>
<reference key="1">
    <citation type="submission" date="2009-03" db="EMBL/GenBank/DDBJ databases">
        <title>Brucella melitensis ATCC 23457 whole genome shotgun sequencing project.</title>
        <authorList>
            <person name="Setubal J.C."/>
            <person name="Boyle S."/>
            <person name="Crasta O.R."/>
            <person name="Gillespie J.J."/>
            <person name="Kenyon R.W."/>
            <person name="Lu J."/>
            <person name="Mane S."/>
            <person name="Nagrani S."/>
            <person name="Shallom J.M."/>
            <person name="Shallom S."/>
            <person name="Shukla M."/>
            <person name="Snyder E.E."/>
            <person name="Sobral B.W."/>
            <person name="Wattam A.R."/>
            <person name="Will R."/>
            <person name="Williams K."/>
            <person name="Yoo H."/>
            <person name="Munk C."/>
            <person name="Tapia R."/>
            <person name="Han C."/>
            <person name="Detter J.C."/>
            <person name="Bruce D."/>
            <person name="Brettin T.S."/>
        </authorList>
    </citation>
    <scope>NUCLEOTIDE SEQUENCE [LARGE SCALE GENOMIC DNA]</scope>
    <source>
        <strain>ATCC 23457</strain>
    </source>
</reference>